<name>RS24_PYRAR</name>
<reference key="1">
    <citation type="submission" date="2007-04" db="EMBL/GenBank/DDBJ databases">
        <title>Complete sequence of Pyrobaculum arsenaticum DSM 13514.</title>
        <authorList>
            <consortium name="US DOE Joint Genome Institute"/>
            <person name="Copeland A."/>
            <person name="Lucas S."/>
            <person name="Lapidus A."/>
            <person name="Barry K."/>
            <person name="Glavina del Rio T."/>
            <person name="Dalin E."/>
            <person name="Tice H."/>
            <person name="Pitluck S."/>
            <person name="Chain P."/>
            <person name="Malfatti S."/>
            <person name="Shin M."/>
            <person name="Vergez L."/>
            <person name="Schmutz J."/>
            <person name="Larimer F."/>
            <person name="Land M."/>
            <person name="Hauser L."/>
            <person name="Kyrpides N."/>
            <person name="Mikhailova N."/>
            <person name="Cozen A.E."/>
            <person name="Fitz-Gibbon S.T."/>
            <person name="House C.H."/>
            <person name="Saltikov C."/>
            <person name="Lowe T.M."/>
            <person name="Richardson P."/>
        </authorList>
    </citation>
    <scope>NUCLEOTIDE SEQUENCE [LARGE SCALE GENOMIC DNA]</scope>
    <source>
        <strain>ATCC 700994 / DSM 13514 / JCM 11321 / PZ6</strain>
    </source>
</reference>
<comment type="similarity">
    <text evidence="1">Belongs to the eukaryotic ribosomal protein eS24 family.</text>
</comment>
<feature type="chain" id="PRO_1000017749" description="Small ribosomal subunit protein eS24">
    <location>
        <begin position="1"/>
        <end position="121"/>
    </location>
</feature>
<evidence type="ECO:0000255" key="1">
    <source>
        <dbReference type="HAMAP-Rule" id="MF_00545"/>
    </source>
</evidence>
<evidence type="ECO:0000305" key="2"/>
<protein>
    <recommendedName>
        <fullName evidence="1">Small ribosomal subunit protein eS24</fullName>
    </recommendedName>
    <alternativeName>
        <fullName evidence="2">30S ribosomal protein S24e</fullName>
    </alternativeName>
</protein>
<organism>
    <name type="scientific">Pyrobaculum arsenaticum (strain DSM 13514 / JCM 11321 / PZ6)</name>
    <dbReference type="NCBI Taxonomy" id="340102"/>
    <lineage>
        <taxon>Archaea</taxon>
        <taxon>Thermoproteota</taxon>
        <taxon>Thermoprotei</taxon>
        <taxon>Thermoproteales</taxon>
        <taxon>Thermoproteaceae</taxon>
        <taxon>Pyrobaculum</taxon>
    </lineage>
</organism>
<keyword id="KW-0687">Ribonucleoprotein</keyword>
<keyword id="KW-0689">Ribosomal protein</keyword>
<sequence length="121" mass="14069">MSAESFNISAIRENKLLARREVLVEVSHHKAPTPTRKDLREWVAKQLGVDVSSVFIRKIKTEYGIGKSVAEVHVYSDSKMARIIEPLYILARNLGEEGKKLLEEVKKKRSERREKKRKRKK</sequence>
<dbReference type="EMBL" id="CP000660">
    <property type="protein sequence ID" value="ABP50996.1"/>
    <property type="molecule type" value="Genomic_DNA"/>
</dbReference>
<dbReference type="SMR" id="A4WKS9"/>
<dbReference type="STRING" id="340102.Pars_1438"/>
<dbReference type="KEGG" id="pas:Pars_1438"/>
<dbReference type="HOGENOM" id="CLU_107248_3_0_2"/>
<dbReference type="OrthoDB" id="27533at2157"/>
<dbReference type="PhylomeDB" id="A4WKS9"/>
<dbReference type="Proteomes" id="UP000001567">
    <property type="component" value="Chromosome"/>
</dbReference>
<dbReference type="GO" id="GO:1990904">
    <property type="term" value="C:ribonucleoprotein complex"/>
    <property type="evidence" value="ECO:0007669"/>
    <property type="project" value="UniProtKB-KW"/>
</dbReference>
<dbReference type="GO" id="GO:0005840">
    <property type="term" value="C:ribosome"/>
    <property type="evidence" value="ECO:0007669"/>
    <property type="project" value="UniProtKB-KW"/>
</dbReference>
<dbReference type="GO" id="GO:0003735">
    <property type="term" value="F:structural constituent of ribosome"/>
    <property type="evidence" value="ECO:0007669"/>
    <property type="project" value="InterPro"/>
</dbReference>
<dbReference type="GO" id="GO:0006412">
    <property type="term" value="P:translation"/>
    <property type="evidence" value="ECO:0007669"/>
    <property type="project" value="UniProtKB-UniRule"/>
</dbReference>
<dbReference type="Gene3D" id="3.30.70.3370">
    <property type="match status" value="1"/>
</dbReference>
<dbReference type="HAMAP" id="MF_00545">
    <property type="entry name" value="Ribosomal_eS24"/>
    <property type="match status" value="1"/>
</dbReference>
<dbReference type="InterPro" id="IPR053709">
    <property type="entry name" value="eRP_eS24_sf"/>
</dbReference>
<dbReference type="InterPro" id="IPR001976">
    <property type="entry name" value="Ribosomal_eS24"/>
</dbReference>
<dbReference type="InterPro" id="IPR012678">
    <property type="entry name" value="Ribosomal_uL23/eL15/eS24_sf"/>
</dbReference>
<dbReference type="PANTHER" id="PTHR10496">
    <property type="entry name" value="40S RIBOSOMAL PROTEIN S24"/>
    <property type="match status" value="1"/>
</dbReference>
<dbReference type="Pfam" id="PF01282">
    <property type="entry name" value="Ribosomal_S24e"/>
    <property type="match status" value="1"/>
</dbReference>
<dbReference type="SUPFAM" id="SSF54189">
    <property type="entry name" value="Ribosomal proteins S24e, L23 and L15e"/>
    <property type="match status" value="1"/>
</dbReference>
<accession>A4WKS9</accession>
<proteinExistence type="inferred from homology"/>
<gene>
    <name evidence="1" type="primary">rps24e</name>
    <name type="ordered locus">Pars_1438</name>
</gene>